<feature type="chain" id="PRO_1000082257" description="Succinate--CoA ligase [ADP-forming] subunit beta">
    <location>
        <begin position="1"/>
        <end position="388"/>
    </location>
</feature>
<feature type="domain" description="ATP-grasp" evidence="1">
    <location>
        <begin position="9"/>
        <end position="244"/>
    </location>
</feature>
<feature type="binding site" evidence="1">
    <location>
        <position position="46"/>
    </location>
    <ligand>
        <name>ATP</name>
        <dbReference type="ChEBI" id="CHEBI:30616"/>
    </ligand>
</feature>
<feature type="binding site" evidence="1">
    <location>
        <begin position="53"/>
        <end position="55"/>
    </location>
    <ligand>
        <name>ATP</name>
        <dbReference type="ChEBI" id="CHEBI:30616"/>
    </ligand>
</feature>
<feature type="binding site" evidence="1">
    <location>
        <position position="99"/>
    </location>
    <ligand>
        <name>ATP</name>
        <dbReference type="ChEBI" id="CHEBI:30616"/>
    </ligand>
</feature>
<feature type="binding site" evidence="1">
    <location>
        <position position="102"/>
    </location>
    <ligand>
        <name>ATP</name>
        <dbReference type="ChEBI" id="CHEBI:30616"/>
    </ligand>
</feature>
<feature type="binding site" evidence="1">
    <location>
        <position position="107"/>
    </location>
    <ligand>
        <name>ATP</name>
        <dbReference type="ChEBI" id="CHEBI:30616"/>
    </ligand>
</feature>
<feature type="binding site" evidence="1">
    <location>
        <position position="199"/>
    </location>
    <ligand>
        <name>Mg(2+)</name>
        <dbReference type="ChEBI" id="CHEBI:18420"/>
    </ligand>
</feature>
<feature type="binding site" evidence="1">
    <location>
        <position position="213"/>
    </location>
    <ligand>
        <name>Mg(2+)</name>
        <dbReference type="ChEBI" id="CHEBI:18420"/>
    </ligand>
</feature>
<feature type="binding site" evidence="1">
    <location>
        <position position="264"/>
    </location>
    <ligand>
        <name>substrate</name>
        <note>ligand shared with subunit alpha</note>
    </ligand>
</feature>
<feature type="binding site" evidence="1">
    <location>
        <begin position="321"/>
        <end position="323"/>
    </location>
    <ligand>
        <name>substrate</name>
        <note>ligand shared with subunit alpha</note>
    </ligand>
</feature>
<protein>
    <recommendedName>
        <fullName evidence="1">Succinate--CoA ligase [ADP-forming] subunit beta</fullName>
        <ecNumber evidence="1">6.2.1.5</ecNumber>
    </recommendedName>
    <alternativeName>
        <fullName evidence="1">Succinyl-CoA synthetase subunit beta</fullName>
        <shortName evidence="1">SCS-beta</shortName>
    </alternativeName>
</protein>
<sequence>MNLHEYQAKQLFAEFGLPVPEGYACDTPQEAFEAAGRITTEKKVVKCQVHAGGRGKAGGVELHDTKDGVKEFAQKWLGKNLVTYQTDANGQPVTKILVEEASNIANELYLGAVVDRATRKIVFMASTEGGVEIEKVAEETPELIHKAAIDPLVGPQAYQGRELAFKLGLEGDQIKQFVKIFMGLGTMFSQYDLALLEINPLVITGEGNLLCLDGKINIDSNALYRQPKLREMHDPSQEDEREAHAAQWELNYVALDGNVGCMVNGAGLAMGTMDIVNLHGGKPANFLDVGGGATKERVAEAFKIILSDDNVKAVLVNIFGGIVRCDMIAEGIIGAVKEVGVTVPVVVRLEGTNADLGREVLANSDVDIIAAESLTDAAQKVVAAAEAK</sequence>
<organism>
    <name type="scientific">Vibrio campbellii (strain ATCC BAA-1116)</name>
    <dbReference type="NCBI Taxonomy" id="2902295"/>
    <lineage>
        <taxon>Bacteria</taxon>
        <taxon>Pseudomonadati</taxon>
        <taxon>Pseudomonadota</taxon>
        <taxon>Gammaproteobacteria</taxon>
        <taxon>Vibrionales</taxon>
        <taxon>Vibrionaceae</taxon>
        <taxon>Vibrio</taxon>
    </lineage>
</organism>
<comment type="function">
    <text evidence="1">Succinyl-CoA synthetase functions in the citric acid cycle (TCA), coupling the hydrolysis of succinyl-CoA to the synthesis of either ATP or GTP and thus represents the only step of substrate-level phosphorylation in the TCA. The beta subunit provides nucleotide specificity of the enzyme and binds the substrate succinate, while the binding sites for coenzyme A and phosphate are found in the alpha subunit.</text>
</comment>
<comment type="catalytic activity">
    <reaction evidence="1">
        <text>succinate + ATP + CoA = succinyl-CoA + ADP + phosphate</text>
        <dbReference type="Rhea" id="RHEA:17661"/>
        <dbReference type="ChEBI" id="CHEBI:30031"/>
        <dbReference type="ChEBI" id="CHEBI:30616"/>
        <dbReference type="ChEBI" id="CHEBI:43474"/>
        <dbReference type="ChEBI" id="CHEBI:57287"/>
        <dbReference type="ChEBI" id="CHEBI:57292"/>
        <dbReference type="ChEBI" id="CHEBI:456216"/>
        <dbReference type="EC" id="6.2.1.5"/>
    </reaction>
    <physiologicalReaction direction="right-to-left" evidence="1">
        <dbReference type="Rhea" id="RHEA:17663"/>
    </physiologicalReaction>
</comment>
<comment type="catalytic activity">
    <reaction evidence="1">
        <text>GTP + succinate + CoA = succinyl-CoA + GDP + phosphate</text>
        <dbReference type="Rhea" id="RHEA:22120"/>
        <dbReference type="ChEBI" id="CHEBI:30031"/>
        <dbReference type="ChEBI" id="CHEBI:37565"/>
        <dbReference type="ChEBI" id="CHEBI:43474"/>
        <dbReference type="ChEBI" id="CHEBI:57287"/>
        <dbReference type="ChEBI" id="CHEBI:57292"/>
        <dbReference type="ChEBI" id="CHEBI:58189"/>
    </reaction>
    <physiologicalReaction direction="right-to-left" evidence="1">
        <dbReference type="Rhea" id="RHEA:22122"/>
    </physiologicalReaction>
</comment>
<comment type="cofactor">
    <cofactor evidence="1">
        <name>Mg(2+)</name>
        <dbReference type="ChEBI" id="CHEBI:18420"/>
    </cofactor>
    <text evidence="1">Binds 1 Mg(2+) ion per subunit.</text>
</comment>
<comment type="pathway">
    <text evidence="1">Carbohydrate metabolism; tricarboxylic acid cycle; succinate from succinyl-CoA (ligase route): step 1/1.</text>
</comment>
<comment type="subunit">
    <text evidence="1">Heterotetramer of two alpha and two beta subunits.</text>
</comment>
<comment type="similarity">
    <text evidence="1">Belongs to the succinate/malate CoA ligase beta subunit family.</text>
</comment>
<accession>A7N158</accession>
<dbReference type="EC" id="6.2.1.5" evidence="1"/>
<dbReference type="EMBL" id="CP000789">
    <property type="protein sequence ID" value="ABU70334.1"/>
    <property type="molecule type" value="Genomic_DNA"/>
</dbReference>
<dbReference type="RefSeq" id="WP_005426700.1">
    <property type="nucleotide sequence ID" value="NC_022269.1"/>
</dbReference>
<dbReference type="SMR" id="A7N158"/>
<dbReference type="GeneID" id="67378053"/>
<dbReference type="KEGG" id="vha:VIBHAR_01357"/>
<dbReference type="PATRIC" id="fig|338187.25.peg.1292"/>
<dbReference type="UniPathway" id="UPA00223">
    <property type="reaction ID" value="UER00999"/>
</dbReference>
<dbReference type="Proteomes" id="UP000008152">
    <property type="component" value="Chromosome I"/>
</dbReference>
<dbReference type="GO" id="GO:0005829">
    <property type="term" value="C:cytosol"/>
    <property type="evidence" value="ECO:0007669"/>
    <property type="project" value="TreeGrafter"/>
</dbReference>
<dbReference type="GO" id="GO:0042709">
    <property type="term" value="C:succinate-CoA ligase complex"/>
    <property type="evidence" value="ECO:0007669"/>
    <property type="project" value="TreeGrafter"/>
</dbReference>
<dbReference type="GO" id="GO:0005524">
    <property type="term" value="F:ATP binding"/>
    <property type="evidence" value="ECO:0007669"/>
    <property type="project" value="UniProtKB-UniRule"/>
</dbReference>
<dbReference type="GO" id="GO:0000287">
    <property type="term" value="F:magnesium ion binding"/>
    <property type="evidence" value="ECO:0007669"/>
    <property type="project" value="UniProtKB-UniRule"/>
</dbReference>
<dbReference type="GO" id="GO:0004775">
    <property type="term" value="F:succinate-CoA ligase (ADP-forming) activity"/>
    <property type="evidence" value="ECO:0007669"/>
    <property type="project" value="UniProtKB-UniRule"/>
</dbReference>
<dbReference type="GO" id="GO:0004776">
    <property type="term" value="F:succinate-CoA ligase (GDP-forming) activity"/>
    <property type="evidence" value="ECO:0007669"/>
    <property type="project" value="RHEA"/>
</dbReference>
<dbReference type="GO" id="GO:0006104">
    <property type="term" value="P:succinyl-CoA metabolic process"/>
    <property type="evidence" value="ECO:0007669"/>
    <property type="project" value="TreeGrafter"/>
</dbReference>
<dbReference type="GO" id="GO:0006099">
    <property type="term" value="P:tricarboxylic acid cycle"/>
    <property type="evidence" value="ECO:0007669"/>
    <property type="project" value="UniProtKB-UniRule"/>
</dbReference>
<dbReference type="FunFam" id="3.30.1490.20:FF:000002">
    <property type="entry name" value="Succinate--CoA ligase [ADP-forming] subunit beta"/>
    <property type="match status" value="1"/>
</dbReference>
<dbReference type="FunFam" id="3.30.470.20:FF:000002">
    <property type="entry name" value="Succinate--CoA ligase [ADP-forming] subunit beta"/>
    <property type="match status" value="1"/>
</dbReference>
<dbReference type="FunFam" id="3.40.50.261:FF:000001">
    <property type="entry name" value="Succinate--CoA ligase [ADP-forming] subunit beta"/>
    <property type="match status" value="1"/>
</dbReference>
<dbReference type="Gene3D" id="3.30.1490.20">
    <property type="entry name" value="ATP-grasp fold, A domain"/>
    <property type="match status" value="1"/>
</dbReference>
<dbReference type="Gene3D" id="3.30.470.20">
    <property type="entry name" value="ATP-grasp fold, B domain"/>
    <property type="match status" value="1"/>
</dbReference>
<dbReference type="Gene3D" id="3.40.50.261">
    <property type="entry name" value="Succinyl-CoA synthetase domains"/>
    <property type="match status" value="1"/>
</dbReference>
<dbReference type="HAMAP" id="MF_00558">
    <property type="entry name" value="Succ_CoA_beta"/>
    <property type="match status" value="1"/>
</dbReference>
<dbReference type="InterPro" id="IPR011761">
    <property type="entry name" value="ATP-grasp"/>
</dbReference>
<dbReference type="InterPro" id="IPR013650">
    <property type="entry name" value="ATP-grasp_succ-CoA_synth-type"/>
</dbReference>
<dbReference type="InterPro" id="IPR013815">
    <property type="entry name" value="ATP_grasp_subdomain_1"/>
</dbReference>
<dbReference type="InterPro" id="IPR017866">
    <property type="entry name" value="Succ-CoA_synthase_bsu_CS"/>
</dbReference>
<dbReference type="InterPro" id="IPR005811">
    <property type="entry name" value="SUCC_ACL_C"/>
</dbReference>
<dbReference type="InterPro" id="IPR005809">
    <property type="entry name" value="Succ_CoA_ligase-like_bsu"/>
</dbReference>
<dbReference type="InterPro" id="IPR016102">
    <property type="entry name" value="Succinyl-CoA_synth-like"/>
</dbReference>
<dbReference type="NCBIfam" id="NF001913">
    <property type="entry name" value="PRK00696.1"/>
    <property type="match status" value="1"/>
</dbReference>
<dbReference type="NCBIfam" id="TIGR01016">
    <property type="entry name" value="sucCoAbeta"/>
    <property type="match status" value="1"/>
</dbReference>
<dbReference type="PANTHER" id="PTHR11815:SF10">
    <property type="entry name" value="SUCCINATE--COA LIGASE [GDP-FORMING] SUBUNIT BETA, MITOCHONDRIAL"/>
    <property type="match status" value="1"/>
</dbReference>
<dbReference type="PANTHER" id="PTHR11815">
    <property type="entry name" value="SUCCINYL-COA SYNTHETASE BETA CHAIN"/>
    <property type="match status" value="1"/>
</dbReference>
<dbReference type="Pfam" id="PF08442">
    <property type="entry name" value="ATP-grasp_2"/>
    <property type="match status" value="1"/>
</dbReference>
<dbReference type="Pfam" id="PF00549">
    <property type="entry name" value="Ligase_CoA"/>
    <property type="match status" value="1"/>
</dbReference>
<dbReference type="PIRSF" id="PIRSF001554">
    <property type="entry name" value="SucCS_beta"/>
    <property type="match status" value="1"/>
</dbReference>
<dbReference type="SUPFAM" id="SSF56059">
    <property type="entry name" value="Glutathione synthetase ATP-binding domain-like"/>
    <property type="match status" value="1"/>
</dbReference>
<dbReference type="SUPFAM" id="SSF52210">
    <property type="entry name" value="Succinyl-CoA synthetase domains"/>
    <property type="match status" value="1"/>
</dbReference>
<dbReference type="PROSITE" id="PS50975">
    <property type="entry name" value="ATP_GRASP"/>
    <property type="match status" value="1"/>
</dbReference>
<dbReference type="PROSITE" id="PS01217">
    <property type="entry name" value="SUCCINYL_COA_LIG_3"/>
    <property type="match status" value="1"/>
</dbReference>
<keyword id="KW-0067">ATP-binding</keyword>
<keyword id="KW-0436">Ligase</keyword>
<keyword id="KW-0460">Magnesium</keyword>
<keyword id="KW-0479">Metal-binding</keyword>
<keyword id="KW-0547">Nucleotide-binding</keyword>
<keyword id="KW-0816">Tricarboxylic acid cycle</keyword>
<name>SUCC_VIBC1</name>
<gene>
    <name evidence="1" type="primary">sucC</name>
    <name type="ordered locus">VIBHAR_01357</name>
</gene>
<reference key="1">
    <citation type="submission" date="2007-08" db="EMBL/GenBank/DDBJ databases">
        <authorList>
            <consortium name="The Vibrio harveyi Genome Sequencing Project"/>
            <person name="Bassler B."/>
            <person name="Clifton S.W."/>
            <person name="Fulton L."/>
            <person name="Delehaunty K."/>
            <person name="Fronick C."/>
            <person name="Harrison M."/>
            <person name="Markivic C."/>
            <person name="Fulton R."/>
            <person name="Tin-Wollam A.-M."/>
            <person name="Shah N."/>
            <person name="Pepin K."/>
            <person name="Nash W."/>
            <person name="Thiruvilangam P."/>
            <person name="Bhonagiri V."/>
            <person name="Waters C."/>
            <person name="Tu K.C."/>
            <person name="Irgon J."/>
            <person name="Wilson R.K."/>
        </authorList>
    </citation>
    <scope>NUCLEOTIDE SEQUENCE [LARGE SCALE GENOMIC DNA]</scope>
    <source>
        <strain>ATCC BAA-1116 / BB120</strain>
    </source>
</reference>
<evidence type="ECO:0000255" key="1">
    <source>
        <dbReference type="HAMAP-Rule" id="MF_00558"/>
    </source>
</evidence>
<proteinExistence type="inferred from homology"/>